<sequence length="339" mass="39027">MVREEVAGSTQTLQWKCVESRVDSKRLYYGRFILSPLRKGQADTVGIALRRALLGEIEGTCITRAKFWSVPHEYSTIAGIEESVQEILLNLKEIVLRSNLYGVRDASICVKGPRYITAQDIILPPSVEIVDTAQPIANLTEPIDFCIDLQIKRDRGYQTELRKNYQDGSYPIDAVSMPVRNVNYSIFSCGNGNEKHEILFLEIWTNGSLTPKEALYEASRNLIDLFLPFLHAEEEGTSFEENKNRFTPPLFTFQKRLTNLKKNKKGIPLNCIFIDQLELTSRTYNCLKRANIHTLLDLLSKTEEDLMRIDSFHMEDRKHIWDTLEKHLPIDLLKNKLSF</sequence>
<accession>Q8MAI9</accession>
<organism>
    <name type="scientific">Elymus californicus</name>
    <name type="common">California bottlebrush grass</name>
    <name type="synonym">Hystrix californica</name>
    <dbReference type="NCBI Taxonomy" id="145786"/>
    <lineage>
        <taxon>Eukaryota</taxon>
        <taxon>Viridiplantae</taxon>
        <taxon>Streptophyta</taxon>
        <taxon>Embryophyta</taxon>
        <taxon>Tracheophyta</taxon>
        <taxon>Spermatophyta</taxon>
        <taxon>Magnoliopsida</taxon>
        <taxon>Liliopsida</taxon>
        <taxon>Poales</taxon>
        <taxon>Poaceae</taxon>
        <taxon>BOP clade</taxon>
        <taxon>Pooideae</taxon>
        <taxon>Triticodae</taxon>
        <taxon>Triticeae</taxon>
        <taxon>Hordeinae</taxon>
        <taxon>Leymus</taxon>
    </lineage>
</organism>
<dbReference type="EC" id="2.7.7.6" evidence="1"/>
<dbReference type="EMBL" id="AY115927">
    <property type="protein sequence ID" value="AAM97436.1"/>
    <property type="molecule type" value="Genomic_DNA"/>
</dbReference>
<dbReference type="SMR" id="Q8MAI9"/>
<dbReference type="GO" id="GO:0009507">
    <property type="term" value="C:chloroplast"/>
    <property type="evidence" value="ECO:0007669"/>
    <property type="project" value="UniProtKB-SubCell"/>
</dbReference>
<dbReference type="GO" id="GO:0000428">
    <property type="term" value="C:DNA-directed RNA polymerase complex"/>
    <property type="evidence" value="ECO:0007669"/>
    <property type="project" value="UniProtKB-KW"/>
</dbReference>
<dbReference type="GO" id="GO:0005739">
    <property type="term" value="C:mitochondrion"/>
    <property type="evidence" value="ECO:0007669"/>
    <property type="project" value="GOC"/>
</dbReference>
<dbReference type="GO" id="GO:0003677">
    <property type="term" value="F:DNA binding"/>
    <property type="evidence" value="ECO:0007669"/>
    <property type="project" value="UniProtKB-UniRule"/>
</dbReference>
<dbReference type="GO" id="GO:0003899">
    <property type="term" value="F:DNA-directed RNA polymerase activity"/>
    <property type="evidence" value="ECO:0007669"/>
    <property type="project" value="UniProtKB-UniRule"/>
</dbReference>
<dbReference type="GO" id="GO:0046983">
    <property type="term" value="F:protein dimerization activity"/>
    <property type="evidence" value="ECO:0007669"/>
    <property type="project" value="InterPro"/>
</dbReference>
<dbReference type="GO" id="GO:0006351">
    <property type="term" value="P:DNA-templated transcription"/>
    <property type="evidence" value="ECO:0007669"/>
    <property type="project" value="UniProtKB-UniRule"/>
</dbReference>
<dbReference type="CDD" id="cd06928">
    <property type="entry name" value="RNAP_alpha_NTD"/>
    <property type="match status" value="1"/>
</dbReference>
<dbReference type="FunFam" id="2.170.120.12:FF:000001">
    <property type="entry name" value="DNA-directed RNA polymerase subunit alpha"/>
    <property type="match status" value="1"/>
</dbReference>
<dbReference type="Gene3D" id="1.10.150.20">
    <property type="entry name" value="5' to 3' exonuclease, C-terminal subdomain"/>
    <property type="match status" value="1"/>
</dbReference>
<dbReference type="Gene3D" id="2.170.120.12">
    <property type="entry name" value="DNA-directed RNA polymerase, insert domain"/>
    <property type="match status" value="1"/>
</dbReference>
<dbReference type="Gene3D" id="3.30.1360.10">
    <property type="entry name" value="RNA polymerase, RBP11-like subunit"/>
    <property type="match status" value="1"/>
</dbReference>
<dbReference type="HAMAP" id="MF_00059">
    <property type="entry name" value="RNApol_bact_RpoA"/>
    <property type="match status" value="1"/>
</dbReference>
<dbReference type="InterPro" id="IPR011262">
    <property type="entry name" value="DNA-dir_RNA_pol_insert"/>
</dbReference>
<dbReference type="InterPro" id="IPR011263">
    <property type="entry name" value="DNA-dir_RNA_pol_RpoA/D/Rpb3"/>
</dbReference>
<dbReference type="InterPro" id="IPR011773">
    <property type="entry name" value="DNA-dir_RpoA"/>
</dbReference>
<dbReference type="InterPro" id="IPR036603">
    <property type="entry name" value="RBP11-like"/>
</dbReference>
<dbReference type="InterPro" id="IPR011260">
    <property type="entry name" value="RNAP_asu_C"/>
</dbReference>
<dbReference type="InterPro" id="IPR036643">
    <property type="entry name" value="RNApol_insert_sf"/>
</dbReference>
<dbReference type="NCBIfam" id="TIGR02027">
    <property type="entry name" value="rpoA"/>
    <property type="match status" value="1"/>
</dbReference>
<dbReference type="Pfam" id="PF01000">
    <property type="entry name" value="RNA_pol_A_bac"/>
    <property type="match status" value="1"/>
</dbReference>
<dbReference type="Pfam" id="PF03118">
    <property type="entry name" value="RNA_pol_A_CTD"/>
    <property type="match status" value="1"/>
</dbReference>
<dbReference type="Pfam" id="PF01193">
    <property type="entry name" value="RNA_pol_L"/>
    <property type="match status" value="1"/>
</dbReference>
<dbReference type="SMART" id="SM00662">
    <property type="entry name" value="RPOLD"/>
    <property type="match status" value="1"/>
</dbReference>
<dbReference type="SUPFAM" id="SSF47789">
    <property type="entry name" value="C-terminal domain of RNA polymerase alpha subunit"/>
    <property type="match status" value="1"/>
</dbReference>
<dbReference type="SUPFAM" id="SSF56553">
    <property type="entry name" value="Insert subdomain of RNA polymerase alpha subunit"/>
    <property type="match status" value="1"/>
</dbReference>
<dbReference type="SUPFAM" id="SSF55257">
    <property type="entry name" value="RBP11-like subunits of RNA polymerase"/>
    <property type="match status" value="1"/>
</dbReference>
<geneLocation type="chloroplast"/>
<protein>
    <recommendedName>
        <fullName evidence="1">DNA-directed RNA polymerase subunit alpha</fullName>
        <shortName evidence="1">PEP</shortName>
        <ecNumber evidence="1">2.7.7.6</ecNumber>
    </recommendedName>
    <alternativeName>
        <fullName evidence="1">Plastid-encoded RNA polymerase subunit alpha</fullName>
        <shortName evidence="1">RNA polymerase subunit alpha</shortName>
    </alternativeName>
</protein>
<gene>
    <name evidence="1" type="primary">rpoA</name>
</gene>
<keyword id="KW-0150">Chloroplast</keyword>
<keyword id="KW-0240">DNA-directed RNA polymerase</keyword>
<keyword id="KW-0548">Nucleotidyltransferase</keyword>
<keyword id="KW-0934">Plastid</keyword>
<keyword id="KW-0804">Transcription</keyword>
<keyword id="KW-0808">Transferase</keyword>
<feature type="chain" id="PRO_0000175453" description="DNA-directed RNA polymerase subunit alpha">
    <location>
        <begin position="1"/>
        <end position="339"/>
    </location>
</feature>
<feature type="region of interest" description="Alpha N-terminal domain (alpha-NTD)" evidence="1">
    <location>
        <begin position="1"/>
        <end position="233"/>
    </location>
</feature>
<feature type="region of interest" description="Alpha C-terminal domain (alpha-CTD)" evidence="1">
    <location>
        <begin position="264"/>
        <end position="339"/>
    </location>
</feature>
<evidence type="ECO:0000255" key="1">
    <source>
        <dbReference type="HAMAP-Rule" id="MF_00059"/>
    </source>
</evidence>
<comment type="function">
    <text evidence="1">DNA-dependent RNA polymerase catalyzes the transcription of DNA into RNA using the four ribonucleoside triphosphates as substrates.</text>
</comment>
<comment type="catalytic activity">
    <reaction evidence="1">
        <text>RNA(n) + a ribonucleoside 5'-triphosphate = RNA(n+1) + diphosphate</text>
        <dbReference type="Rhea" id="RHEA:21248"/>
        <dbReference type="Rhea" id="RHEA-COMP:14527"/>
        <dbReference type="Rhea" id="RHEA-COMP:17342"/>
        <dbReference type="ChEBI" id="CHEBI:33019"/>
        <dbReference type="ChEBI" id="CHEBI:61557"/>
        <dbReference type="ChEBI" id="CHEBI:140395"/>
        <dbReference type="EC" id="2.7.7.6"/>
    </reaction>
</comment>
<comment type="subunit">
    <text evidence="1">In plastids the minimal PEP RNA polymerase catalytic core is composed of four subunits: alpha, beta, beta', and beta''. When a (nuclear-encoded) sigma factor is associated with the core the holoenzyme is formed, which can initiate transcription.</text>
</comment>
<comment type="subcellular location">
    <subcellularLocation>
        <location>Plastid</location>
        <location>Chloroplast</location>
    </subcellularLocation>
</comment>
<comment type="domain">
    <text evidence="1">The N-terminal domain is essential for RNAP assembly and basal transcription, whereas the C-terminal domain is involved in interaction with transcriptional regulators and with upstream promoter elements.</text>
</comment>
<comment type="similarity">
    <text evidence="1">Belongs to the RNA polymerase alpha chain family.</text>
</comment>
<name>RPOA_ELYCL</name>
<proteinExistence type="inferred from homology"/>
<reference key="1">
    <citation type="journal article" date="2002" name="Genome">
        <title>Phylogenetic analysis of North American Elymus and the monogenomic Triticeae (Poaceae) using three chloroplast DNA data sets.</title>
        <authorList>
            <person name="Mason-Gamer R.J."/>
            <person name="Orme N.L."/>
            <person name="Anderson C.M."/>
        </authorList>
    </citation>
    <scope>NUCLEOTIDE SEQUENCE [GENOMIC DNA]</scope>
    <source>
        <strain>Barkworthsn</strain>
    </source>
</reference>